<organism>
    <name type="scientific">Shigella sonnei (strain Ss046)</name>
    <dbReference type="NCBI Taxonomy" id="300269"/>
    <lineage>
        <taxon>Bacteria</taxon>
        <taxon>Pseudomonadati</taxon>
        <taxon>Pseudomonadota</taxon>
        <taxon>Gammaproteobacteria</taxon>
        <taxon>Enterobacterales</taxon>
        <taxon>Enterobacteriaceae</taxon>
        <taxon>Shigella</taxon>
    </lineage>
</organism>
<sequence length="292" mass="31284">MFTGSIVAIVTPMDEKGNVCRASLKKLIDYHVASGTSAIVSVGTTGESATLNHDEHADVVMMTLELADGRIPVIAGTGANATAEAISLTQRFNDSGIVGCLTVTPYYNRPSQEGLYQHFKAIAEHTDLPQILYNVPSRTGCDLLPETVGRLAKVKNIIGIKEATGNLTRVNQIKELVSDDFVLLSGDDASALDFMQLGGHGVISVTANVAARDMAQMCKLAAEGHFAEARVINQRLMPLHNKLFVEPNPIPVKWACKELGLVATDTLRLPMTPITDSGRETVRAALKHAGLL</sequence>
<feature type="chain" id="PRO_1000050274" description="4-hydroxy-tetrahydrodipicolinate synthase">
    <location>
        <begin position="1"/>
        <end position="292"/>
    </location>
</feature>
<feature type="active site" description="Proton donor/acceptor" evidence="1">
    <location>
        <position position="133"/>
    </location>
</feature>
<feature type="active site" description="Schiff-base intermediate with substrate" evidence="1">
    <location>
        <position position="161"/>
    </location>
</feature>
<feature type="binding site" evidence="1">
    <location>
        <position position="45"/>
    </location>
    <ligand>
        <name>pyruvate</name>
        <dbReference type="ChEBI" id="CHEBI:15361"/>
    </ligand>
</feature>
<feature type="binding site" evidence="1">
    <location>
        <position position="203"/>
    </location>
    <ligand>
        <name>pyruvate</name>
        <dbReference type="ChEBI" id="CHEBI:15361"/>
    </ligand>
</feature>
<feature type="site" description="Part of a proton relay during catalysis" evidence="1">
    <location>
        <position position="44"/>
    </location>
</feature>
<feature type="site" description="Part of a proton relay during catalysis" evidence="1">
    <location>
        <position position="107"/>
    </location>
</feature>
<evidence type="ECO:0000255" key="1">
    <source>
        <dbReference type="HAMAP-Rule" id="MF_00418"/>
    </source>
</evidence>
<evidence type="ECO:0000305" key="2"/>
<keyword id="KW-0028">Amino-acid biosynthesis</keyword>
<keyword id="KW-0963">Cytoplasm</keyword>
<keyword id="KW-0220">Diaminopimelate biosynthesis</keyword>
<keyword id="KW-0456">Lyase</keyword>
<keyword id="KW-0457">Lysine biosynthesis</keyword>
<keyword id="KW-1185">Reference proteome</keyword>
<keyword id="KW-0704">Schiff base</keyword>
<name>DAPA_SHISS</name>
<accession>Q3YZ74</accession>
<proteinExistence type="inferred from homology"/>
<gene>
    <name evidence="1" type="primary">dapA</name>
    <name type="ordered locus">SSON_2559</name>
</gene>
<reference key="1">
    <citation type="journal article" date="2005" name="Nucleic Acids Res.">
        <title>Genome dynamics and diversity of Shigella species, the etiologic agents of bacillary dysentery.</title>
        <authorList>
            <person name="Yang F."/>
            <person name="Yang J."/>
            <person name="Zhang X."/>
            <person name="Chen L."/>
            <person name="Jiang Y."/>
            <person name="Yan Y."/>
            <person name="Tang X."/>
            <person name="Wang J."/>
            <person name="Xiong Z."/>
            <person name="Dong J."/>
            <person name="Xue Y."/>
            <person name="Zhu Y."/>
            <person name="Xu X."/>
            <person name="Sun L."/>
            <person name="Chen S."/>
            <person name="Nie H."/>
            <person name="Peng J."/>
            <person name="Xu J."/>
            <person name="Wang Y."/>
            <person name="Yuan Z."/>
            <person name="Wen Y."/>
            <person name="Yao Z."/>
            <person name="Shen Y."/>
            <person name="Qiang B."/>
            <person name="Hou Y."/>
            <person name="Yu J."/>
            <person name="Jin Q."/>
        </authorList>
    </citation>
    <scope>NUCLEOTIDE SEQUENCE [LARGE SCALE GENOMIC DNA]</scope>
    <source>
        <strain>Ss046</strain>
    </source>
</reference>
<protein>
    <recommendedName>
        <fullName evidence="1">4-hydroxy-tetrahydrodipicolinate synthase</fullName>
        <shortName evidence="1">HTPA synthase</shortName>
        <ecNumber evidence="1">4.3.3.7</ecNumber>
    </recommendedName>
</protein>
<comment type="function">
    <text evidence="1">Catalyzes the condensation of (S)-aspartate-beta-semialdehyde [(S)-ASA] and pyruvate to 4-hydroxy-tetrahydrodipicolinate (HTPA).</text>
</comment>
<comment type="catalytic activity">
    <reaction evidence="1">
        <text>L-aspartate 4-semialdehyde + pyruvate = (2S,4S)-4-hydroxy-2,3,4,5-tetrahydrodipicolinate + H2O + H(+)</text>
        <dbReference type="Rhea" id="RHEA:34171"/>
        <dbReference type="ChEBI" id="CHEBI:15361"/>
        <dbReference type="ChEBI" id="CHEBI:15377"/>
        <dbReference type="ChEBI" id="CHEBI:15378"/>
        <dbReference type="ChEBI" id="CHEBI:67139"/>
        <dbReference type="ChEBI" id="CHEBI:537519"/>
        <dbReference type="EC" id="4.3.3.7"/>
    </reaction>
</comment>
<comment type="pathway">
    <text evidence="1">Amino-acid biosynthesis; L-lysine biosynthesis via DAP pathway; (S)-tetrahydrodipicolinate from L-aspartate: step 3/4.</text>
</comment>
<comment type="subunit">
    <text evidence="1">Homotetramer; dimer of dimers.</text>
</comment>
<comment type="subcellular location">
    <subcellularLocation>
        <location evidence="1">Cytoplasm</location>
    </subcellularLocation>
</comment>
<comment type="similarity">
    <text evidence="1">Belongs to the DapA family.</text>
</comment>
<comment type="caution">
    <text evidence="2">Was originally thought to be a dihydrodipicolinate synthase (DHDPS), catalyzing the condensation of (S)-aspartate-beta-semialdehyde [(S)-ASA] and pyruvate to dihydrodipicolinate (DHDP). However, it was shown in E.coli that the product of the enzymatic reaction is not dihydrodipicolinate but in fact (4S)-4-hydroxy-2,3,4,5-tetrahydro-(2S)-dipicolinic acid (HTPA), and that the consecutive dehydration reaction leading to DHDP is not spontaneous but catalyzed by DapB.</text>
</comment>
<dbReference type="EC" id="4.3.3.7" evidence="1"/>
<dbReference type="EMBL" id="CP000038">
    <property type="protein sequence ID" value="AAZ89188.1"/>
    <property type="molecule type" value="Genomic_DNA"/>
</dbReference>
<dbReference type="RefSeq" id="WP_001295469.1">
    <property type="nucleotide sequence ID" value="NC_007384.1"/>
</dbReference>
<dbReference type="SMR" id="Q3YZ74"/>
<dbReference type="GeneID" id="93774660"/>
<dbReference type="KEGG" id="ssn:SSON_2559"/>
<dbReference type="HOGENOM" id="CLU_049343_7_1_6"/>
<dbReference type="UniPathway" id="UPA00034">
    <property type="reaction ID" value="UER00017"/>
</dbReference>
<dbReference type="Proteomes" id="UP000002529">
    <property type="component" value="Chromosome"/>
</dbReference>
<dbReference type="GO" id="GO:0005829">
    <property type="term" value="C:cytosol"/>
    <property type="evidence" value="ECO:0007669"/>
    <property type="project" value="TreeGrafter"/>
</dbReference>
<dbReference type="GO" id="GO:0008840">
    <property type="term" value="F:4-hydroxy-tetrahydrodipicolinate synthase activity"/>
    <property type="evidence" value="ECO:0007669"/>
    <property type="project" value="UniProtKB-UniRule"/>
</dbReference>
<dbReference type="GO" id="GO:0019877">
    <property type="term" value="P:diaminopimelate biosynthetic process"/>
    <property type="evidence" value="ECO:0007669"/>
    <property type="project" value="UniProtKB-UniRule"/>
</dbReference>
<dbReference type="GO" id="GO:0009089">
    <property type="term" value="P:lysine biosynthetic process via diaminopimelate"/>
    <property type="evidence" value="ECO:0007669"/>
    <property type="project" value="UniProtKB-UniRule"/>
</dbReference>
<dbReference type="CDD" id="cd00950">
    <property type="entry name" value="DHDPS"/>
    <property type="match status" value="1"/>
</dbReference>
<dbReference type="FunFam" id="3.20.20.70:FF:000046">
    <property type="entry name" value="4-hydroxy-tetrahydrodipicolinate synthase"/>
    <property type="match status" value="1"/>
</dbReference>
<dbReference type="Gene3D" id="3.20.20.70">
    <property type="entry name" value="Aldolase class I"/>
    <property type="match status" value="1"/>
</dbReference>
<dbReference type="HAMAP" id="MF_00418">
    <property type="entry name" value="DapA"/>
    <property type="match status" value="1"/>
</dbReference>
<dbReference type="InterPro" id="IPR013785">
    <property type="entry name" value="Aldolase_TIM"/>
</dbReference>
<dbReference type="InterPro" id="IPR005263">
    <property type="entry name" value="DapA"/>
</dbReference>
<dbReference type="InterPro" id="IPR002220">
    <property type="entry name" value="DapA-like"/>
</dbReference>
<dbReference type="InterPro" id="IPR020625">
    <property type="entry name" value="Schiff_base-form_aldolases_AS"/>
</dbReference>
<dbReference type="InterPro" id="IPR020624">
    <property type="entry name" value="Schiff_base-form_aldolases_CS"/>
</dbReference>
<dbReference type="NCBIfam" id="TIGR00674">
    <property type="entry name" value="dapA"/>
    <property type="match status" value="1"/>
</dbReference>
<dbReference type="PANTHER" id="PTHR12128:SF66">
    <property type="entry name" value="4-HYDROXY-2-OXOGLUTARATE ALDOLASE, MITOCHONDRIAL"/>
    <property type="match status" value="1"/>
</dbReference>
<dbReference type="PANTHER" id="PTHR12128">
    <property type="entry name" value="DIHYDRODIPICOLINATE SYNTHASE"/>
    <property type="match status" value="1"/>
</dbReference>
<dbReference type="Pfam" id="PF00701">
    <property type="entry name" value="DHDPS"/>
    <property type="match status" value="1"/>
</dbReference>
<dbReference type="PIRSF" id="PIRSF001365">
    <property type="entry name" value="DHDPS"/>
    <property type="match status" value="1"/>
</dbReference>
<dbReference type="PRINTS" id="PR00146">
    <property type="entry name" value="DHPICSNTHASE"/>
</dbReference>
<dbReference type="SMART" id="SM01130">
    <property type="entry name" value="DHDPS"/>
    <property type="match status" value="1"/>
</dbReference>
<dbReference type="SUPFAM" id="SSF51569">
    <property type="entry name" value="Aldolase"/>
    <property type="match status" value="1"/>
</dbReference>
<dbReference type="PROSITE" id="PS00665">
    <property type="entry name" value="DHDPS_1"/>
    <property type="match status" value="1"/>
</dbReference>
<dbReference type="PROSITE" id="PS00666">
    <property type="entry name" value="DHDPS_2"/>
    <property type="match status" value="1"/>
</dbReference>